<name>Y022_TREPA</name>
<proteinExistence type="predicted"/>
<feature type="chain" id="PRO_0000202178" description="Uncharacterized protein TP_0022">
    <location>
        <begin position="1"/>
        <end position="722"/>
    </location>
</feature>
<accession>O83066</accession>
<dbReference type="EMBL" id="AE000520">
    <property type="protein sequence ID" value="AAC65022.1"/>
    <property type="molecule type" value="Genomic_DNA"/>
</dbReference>
<dbReference type="PIR" id="B71376">
    <property type="entry name" value="B71376"/>
</dbReference>
<dbReference type="STRING" id="243276.TP_0022"/>
<dbReference type="EnsemblBacteria" id="AAC65022">
    <property type="protein sequence ID" value="AAC65022"/>
    <property type="gene ID" value="TP_0022"/>
</dbReference>
<dbReference type="KEGG" id="tpa:TP_0022"/>
<dbReference type="KEGG" id="tpw:TPANIC_0022"/>
<dbReference type="eggNOG" id="ENOG5033VMJ">
    <property type="taxonomic scope" value="Bacteria"/>
</dbReference>
<dbReference type="HOGENOM" id="CLU_403286_0_0_12"/>
<dbReference type="Proteomes" id="UP000000811">
    <property type="component" value="Chromosome"/>
</dbReference>
<sequence>MRSPCNARAADNFFLERVAQAEIRTRLLNLEERLILYRIPQMPGEVTQAEVASVAQNGRVRQTPCYGINPLLQKALSTVAGLNLFLIPQKRMRPSAQLLTTDLMLCALYSFFTHGENLLKVDGTFRKKAFVMFQALFPVDPDVVSVALPAYLQRAGEERGTSRLLQEGRRVLEHLGLIVCESAQVHVQDKRWASFFSLTALERAVYLTVASTAILRKEVLVQRAQALRTLLCVLHPDAQYAPEDLTRVYRILVEEAAPSVAADFFSSLSLSKDTMLQKRKGALHDSSVFSMQSAITAIRTAQLFGLLCVKDGLCALNEALFKGQYTRGPGMVLSATAELTIFPDGDMQGVLPILSCAHVCSLQTVATFELNKKSCTTGFARGLTVQALAQALECKTGEQVPQNILSSFRQWYAQITALTLRRGFVMQVDSSQQAFFESGGPLHPLVRTRLAEGVYFFDECQECMLYQALARARLSYLCEPIDTATPLFRPGEQGARALHVPSFSFPVRSARGVSEESTRDFAHLGAFVLETPNVSCTHSAADTPSISEQTGGVAHVQSEEDVDPSTSGATGKYWDKAQWRKVQRMRRAVRLQRLKEFEAHLQQLKLDATEQTELRARLQRGLILDRMQLSSETIRRERTEASGVDFLGKYRLAECALRSGALLEIETSSGQSVHKIVGTVCAIEKCEEDALLHVCVHAELPPERVSIARASRIVLLKNSIFS</sequence>
<keyword id="KW-1185">Reference proteome</keyword>
<reference key="1">
    <citation type="journal article" date="1998" name="Science">
        <title>Complete genome sequence of Treponema pallidum, the syphilis spirochete.</title>
        <authorList>
            <person name="Fraser C.M."/>
            <person name="Norris S.J."/>
            <person name="Weinstock G.M."/>
            <person name="White O."/>
            <person name="Sutton G.G."/>
            <person name="Dodson R.J."/>
            <person name="Gwinn M.L."/>
            <person name="Hickey E.K."/>
            <person name="Clayton R.A."/>
            <person name="Ketchum K.A."/>
            <person name="Sodergren E."/>
            <person name="Hardham J.M."/>
            <person name="McLeod M.P."/>
            <person name="Salzberg S.L."/>
            <person name="Peterson J.D."/>
            <person name="Khalak H.G."/>
            <person name="Richardson D.L."/>
            <person name="Howell J.K."/>
            <person name="Chidambaram M."/>
            <person name="Utterback T.R."/>
            <person name="McDonald L.A."/>
            <person name="Artiach P."/>
            <person name="Bowman C."/>
            <person name="Cotton M.D."/>
            <person name="Fujii C."/>
            <person name="Garland S.A."/>
            <person name="Hatch B."/>
            <person name="Horst K."/>
            <person name="Roberts K.M."/>
            <person name="Sandusky M."/>
            <person name="Weidman J.F."/>
            <person name="Smith H.O."/>
            <person name="Venter J.C."/>
        </authorList>
    </citation>
    <scope>NUCLEOTIDE SEQUENCE [LARGE SCALE GENOMIC DNA]</scope>
    <source>
        <strain>Nichols</strain>
    </source>
</reference>
<protein>
    <recommendedName>
        <fullName>Uncharacterized protein TP_0022</fullName>
    </recommendedName>
</protein>
<organism>
    <name type="scientific">Treponema pallidum (strain Nichols)</name>
    <dbReference type="NCBI Taxonomy" id="243276"/>
    <lineage>
        <taxon>Bacteria</taxon>
        <taxon>Pseudomonadati</taxon>
        <taxon>Spirochaetota</taxon>
        <taxon>Spirochaetia</taxon>
        <taxon>Spirochaetales</taxon>
        <taxon>Treponemataceae</taxon>
        <taxon>Treponema</taxon>
    </lineage>
</organism>
<gene>
    <name type="ordered locus">TP_0022</name>
</gene>